<evidence type="ECO:0000250" key="1">
    <source>
        <dbReference type="UniProtKB" id="Q9ES17"/>
    </source>
</evidence>
<evidence type="ECO:0000250" key="2">
    <source>
        <dbReference type="UniProtKB" id="Q9HBE4"/>
    </source>
</evidence>
<evidence type="ECO:0000269" key="3">
    <source>
    </source>
</evidence>
<evidence type="ECO:0000305" key="4"/>
<evidence type="ECO:0000305" key="5">
    <source>
    </source>
</evidence>
<organism>
    <name type="scientific">Bos taurus</name>
    <name type="common">Bovine</name>
    <dbReference type="NCBI Taxonomy" id="9913"/>
    <lineage>
        <taxon>Eukaryota</taxon>
        <taxon>Metazoa</taxon>
        <taxon>Chordata</taxon>
        <taxon>Craniata</taxon>
        <taxon>Vertebrata</taxon>
        <taxon>Euteleostomi</taxon>
        <taxon>Mammalia</taxon>
        <taxon>Eutheria</taxon>
        <taxon>Laurasiatheria</taxon>
        <taxon>Artiodactyla</taxon>
        <taxon>Ruminantia</taxon>
        <taxon>Pecora</taxon>
        <taxon>Bovidae</taxon>
        <taxon>Bovinae</taxon>
        <taxon>Bos</taxon>
    </lineage>
</organism>
<feature type="signal peptide" evidence="5">
    <location>
        <begin position="1"/>
        <end position="23"/>
    </location>
</feature>
<feature type="chain" id="PRO_0000015503" description="Interleukin-21">
    <location>
        <begin position="24"/>
        <end position="152"/>
    </location>
</feature>
<feature type="disulfide bond" evidence="2">
    <location>
        <begin position="70"/>
        <end position="121"/>
    </location>
</feature>
<feature type="disulfide bond" evidence="2">
    <location>
        <begin position="77"/>
        <end position="124"/>
    </location>
</feature>
<dbReference type="EMBL" id="AB073021">
    <property type="protein sequence ID" value="BAC87747.1"/>
    <property type="molecule type" value="mRNA"/>
</dbReference>
<dbReference type="RefSeq" id="NP_942129.1">
    <property type="nucleotide sequence ID" value="NM_198832.1"/>
</dbReference>
<dbReference type="SMR" id="Q76LU5"/>
<dbReference type="STRING" id="9913.ENSBTAP00000016413"/>
<dbReference type="PaxDb" id="9913-ENSBTAP00000016413"/>
<dbReference type="GeneID" id="378475"/>
<dbReference type="KEGG" id="bta:378475"/>
<dbReference type="CTD" id="59067"/>
<dbReference type="eggNOG" id="ENOG502SES1">
    <property type="taxonomic scope" value="Eukaryota"/>
</dbReference>
<dbReference type="HOGENOM" id="CLU_127182_1_0_1"/>
<dbReference type="InParanoid" id="Q76LU5"/>
<dbReference type="OrthoDB" id="9426569at2759"/>
<dbReference type="Proteomes" id="UP000009136">
    <property type="component" value="Unplaced"/>
</dbReference>
<dbReference type="GO" id="GO:0005615">
    <property type="term" value="C:extracellular space"/>
    <property type="evidence" value="ECO:0007669"/>
    <property type="project" value="UniProtKB-KW"/>
</dbReference>
<dbReference type="GO" id="GO:0005125">
    <property type="term" value="F:cytokine activity"/>
    <property type="evidence" value="ECO:0007669"/>
    <property type="project" value="UniProtKB-KW"/>
</dbReference>
<dbReference type="GO" id="GO:0005126">
    <property type="term" value="F:cytokine receptor binding"/>
    <property type="evidence" value="ECO:0007669"/>
    <property type="project" value="InterPro"/>
</dbReference>
<dbReference type="GO" id="GO:0098586">
    <property type="term" value="P:cellular response to virus"/>
    <property type="evidence" value="ECO:0000250"/>
    <property type="project" value="UniProtKB"/>
</dbReference>
<dbReference type="GO" id="GO:0002314">
    <property type="term" value="P:germinal center B cell differentiation"/>
    <property type="evidence" value="ECO:0000250"/>
    <property type="project" value="UniProtKB"/>
</dbReference>
<dbReference type="GO" id="GO:0001819">
    <property type="term" value="P:positive regulation of cytokine production"/>
    <property type="evidence" value="ECO:0000318"/>
    <property type="project" value="GO_Central"/>
</dbReference>
<dbReference type="GO" id="GO:0002639">
    <property type="term" value="P:positive regulation of immunoglobulin production"/>
    <property type="evidence" value="ECO:0000250"/>
    <property type="project" value="UniProtKB"/>
</dbReference>
<dbReference type="GO" id="GO:0045954">
    <property type="term" value="P:positive regulation of natural killer cell mediated cytotoxicity"/>
    <property type="evidence" value="ECO:0000318"/>
    <property type="project" value="GO_Central"/>
</dbReference>
<dbReference type="GO" id="GO:0061470">
    <property type="term" value="P:T follicular helper cell differentiation"/>
    <property type="evidence" value="ECO:0000250"/>
    <property type="project" value="UniProtKB"/>
</dbReference>
<dbReference type="FunFam" id="1.20.1250.70:FF:000002">
    <property type="entry name" value="Interleukin"/>
    <property type="match status" value="1"/>
</dbReference>
<dbReference type="Gene3D" id="1.20.1250.70">
    <property type="entry name" value="Interleukin-15/Interleukin-21"/>
    <property type="match status" value="1"/>
</dbReference>
<dbReference type="InterPro" id="IPR009079">
    <property type="entry name" value="4_helix_cytokine-like_core"/>
</dbReference>
<dbReference type="InterPro" id="IPR003443">
    <property type="entry name" value="IL-15/IL-21_fam"/>
</dbReference>
<dbReference type="PANTHER" id="PTHR14356">
    <property type="entry name" value="INTERLEUKIN-15-RELATED"/>
    <property type="match status" value="1"/>
</dbReference>
<dbReference type="PANTHER" id="PTHR14356:SF2">
    <property type="entry name" value="INTERLEUKIN-21"/>
    <property type="match status" value="1"/>
</dbReference>
<dbReference type="Pfam" id="PF02372">
    <property type="entry name" value="IL15"/>
    <property type="match status" value="1"/>
</dbReference>
<dbReference type="SUPFAM" id="SSF47266">
    <property type="entry name" value="4-helical cytokines"/>
    <property type="match status" value="1"/>
</dbReference>
<comment type="function">
    <text evidence="1 2">Cytokine with immunoregulatory activity. May promote the transition between innate and adaptive immunity. Induces the production of IgG(1) and IgG(3) in B-cells. Implicated in the generation and maintenance of T follicular helper (Tfh) cells and the formation of germinal-centers. Together with IL6, control the early generation of Tfh cells and are critical for an effective antibody response to acute viral infection (By similarity). May play a role in proliferation and maturation of natural killer (NK) cells in synergy with IL15. May regulate proliferation of mature B- and T-cells in response to activating stimuli. In synergy with IL15 and IL18 stimulates interferon gamma production in T-cells and NK cells (By similarity). During T-cell mediated immune response may inhibit dendritic cells (DC) activation and maturation (By similarity).</text>
</comment>
<comment type="subcellular location">
    <subcellularLocation>
        <location evidence="3">Secreted</location>
    </subcellularLocation>
</comment>
<comment type="tissue specificity">
    <text evidence="3">Expressed in spleen, but not in the brain, heart, kidney, liver, and lung.</text>
</comment>
<comment type="similarity">
    <text evidence="4">Belongs to the IL-15/IL-21 family.</text>
</comment>
<comment type="caution">
    <text evidence="4">It is uncertain whether Met-1 or Met-7 is the initiator.</text>
</comment>
<sequence length="152" mass="17690">MRWPGNMERIVICLMVIFSGTVAHKSSSQGQDRLFIRLRQLIDIVDQLKNYVNDLDPEFLPAPEDVKRHCERSAFSCFQKVQLKSANNGDNEKIINILTKQLKRKLPATNTGRRQKHEVTCPSCDSYEKKPPKEYLERLKSLIQKMIHQHLS</sequence>
<name>IL21_BOVIN</name>
<protein>
    <recommendedName>
        <fullName>Interleukin-21</fullName>
        <shortName>IL-21</shortName>
    </recommendedName>
</protein>
<reference key="1">
    <citation type="journal article" date="2003" name="Vet. Immunol. Immunopathol.">
        <title>Cloning, expression, and tissue distribution of bovine interleukin-21.</title>
        <authorList>
            <person name="Muneta Y."/>
            <person name="Kikuma R."/>
            <person name="Yoshihara K."/>
            <person name="Mori Y."/>
        </authorList>
    </citation>
    <scope>NUCLEOTIDE SEQUENCE [MRNA]</scope>
    <scope>PROTEIN SEQUENCE OF 24-38</scope>
    <scope>SUBCELLULAR LOCATION</scope>
    <scope>TISSUE SPECIFICITY</scope>
</reference>
<proteinExistence type="evidence at protein level"/>
<gene>
    <name type="primary">IL21</name>
</gene>
<keyword id="KW-0202">Cytokine</keyword>
<keyword id="KW-0903">Direct protein sequencing</keyword>
<keyword id="KW-1015">Disulfide bond</keyword>
<keyword id="KW-1185">Reference proteome</keyword>
<keyword id="KW-0964">Secreted</keyword>
<keyword id="KW-0732">Signal</keyword>
<accession>Q76LU5</accession>